<gene>
    <name evidence="1" type="primary">hisF</name>
    <name type="ordered locus">Pro_0426</name>
</gene>
<proteinExistence type="inferred from homology"/>
<keyword id="KW-0028">Amino-acid biosynthesis</keyword>
<keyword id="KW-0963">Cytoplasm</keyword>
<keyword id="KW-0368">Histidine biosynthesis</keyword>
<keyword id="KW-0456">Lyase</keyword>
<keyword id="KW-1185">Reference proteome</keyword>
<reference key="1">
    <citation type="journal article" date="2003" name="Proc. Natl. Acad. Sci. U.S.A.">
        <title>Genome sequence of the cyanobacterium Prochlorococcus marinus SS120, a nearly minimal oxyphototrophic genome.</title>
        <authorList>
            <person name="Dufresne A."/>
            <person name="Salanoubat M."/>
            <person name="Partensky F."/>
            <person name="Artiguenave F."/>
            <person name="Axmann I.M."/>
            <person name="Barbe V."/>
            <person name="Duprat S."/>
            <person name="Galperin M.Y."/>
            <person name="Koonin E.V."/>
            <person name="Le Gall F."/>
            <person name="Makarova K.S."/>
            <person name="Ostrowski M."/>
            <person name="Oztas S."/>
            <person name="Robert C."/>
            <person name="Rogozin I.B."/>
            <person name="Scanlan D.J."/>
            <person name="Tandeau de Marsac N."/>
            <person name="Weissenbach J."/>
            <person name="Wincker P."/>
            <person name="Wolf Y.I."/>
            <person name="Hess W.R."/>
        </authorList>
    </citation>
    <scope>NUCLEOTIDE SEQUENCE [LARGE SCALE GENOMIC DNA]</scope>
    <source>
        <strain>SARG / CCMP1375 / SS120</strain>
    </source>
</reference>
<organism>
    <name type="scientific">Prochlorococcus marinus (strain SARG / CCMP1375 / SS120)</name>
    <dbReference type="NCBI Taxonomy" id="167539"/>
    <lineage>
        <taxon>Bacteria</taxon>
        <taxon>Bacillati</taxon>
        <taxon>Cyanobacteriota</taxon>
        <taxon>Cyanophyceae</taxon>
        <taxon>Synechococcales</taxon>
        <taxon>Prochlorococcaceae</taxon>
        <taxon>Prochlorococcus</taxon>
    </lineage>
</organism>
<dbReference type="EC" id="4.3.2.10" evidence="1"/>
<dbReference type="EMBL" id="AE017126">
    <property type="protein sequence ID" value="AAP99472.1"/>
    <property type="molecule type" value="Genomic_DNA"/>
</dbReference>
<dbReference type="RefSeq" id="NP_874820.1">
    <property type="nucleotide sequence ID" value="NC_005042.1"/>
</dbReference>
<dbReference type="RefSeq" id="WP_011124581.1">
    <property type="nucleotide sequence ID" value="NC_005042.1"/>
</dbReference>
<dbReference type="SMR" id="Q7VDF1"/>
<dbReference type="STRING" id="167539.Pro_0426"/>
<dbReference type="EnsemblBacteria" id="AAP99472">
    <property type="protein sequence ID" value="AAP99472"/>
    <property type="gene ID" value="Pro_0426"/>
</dbReference>
<dbReference type="KEGG" id="pma:Pro_0426"/>
<dbReference type="PATRIC" id="fig|167539.5.peg.436"/>
<dbReference type="eggNOG" id="COG0107">
    <property type="taxonomic scope" value="Bacteria"/>
</dbReference>
<dbReference type="HOGENOM" id="CLU_048577_4_0_3"/>
<dbReference type="OrthoDB" id="9781903at2"/>
<dbReference type="UniPathway" id="UPA00031">
    <property type="reaction ID" value="UER00010"/>
</dbReference>
<dbReference type="Proteomes" id="UP000001420">
    <property type="component" value="Chromosome"/>
</dbReference>
<dbReference type="GO" id="GO:0005737">
    <property type="term" value="C:cytoplasm"/>
    <property type="evidence" value="ECO:0007669"/>
    <property type="project" value="UniProtKB-SubCell"/>
</dbReference>
<dbReference type="GO" id="GO:0000107">
    <property type="term" value="F:imidazoleglycerol-phosphate synthase activity"/>
    <property type="evidence" value="ECO:0007669"/>
    <property type="project" value="UniProtKB-UniRule"/>
</dbReference>
<dbReference type="GO" id="GO:0016829">
    <property type="term" value="F:lyase activity"/>
    <property type="evidence" value="ECO:0007669"/>
    <property type="project" value="UniProtKB-KW"/>
</dbReference>
<dbReference type="GO" id="GO:0000105">
    <property type="term" value="P:L-histidine biosynthetic process"/>
    <property type="evidence" value="ECO:0007669"/>
    <property type="project" value="UniProtKB-UniRule"/>
</dbReference>
<dbReference type="CDD" id="cd04731">
    <property type="entry name" value="HisF"/>
    <property type="match status" value="1"/>
</dbReference>
<dbReference type="FunFam" id="3.20.20.70:FF:000006">
    <property type="entry name" value="Imidazole glycerol phosphate synthase subunit HisF"/>
    <property type="match status" value="1"/>
</dbReference>
<dbReference type="Gene3D" id="3.20.20.70">
    <property type="entry name" value="Aldolase class I"/>
    <property type="match status" value="1"/>
</dbReference>
<dbReference type="HAMAP" id="MF_01013">
    <property type="entry name" value="HisF"/>
    <property type="match status" value="1"/>
</dbReference>
<dbReference type="InterPro" id="IPR013785">
    <property type="entry name" value="Aldolase_TIM"/>
</dbReference>
<dbReference type="InterPro" id="IPR006062">
    <property type="entry name" value="His_biosynth"/>
</dbReference>
<dbReference type="InterPro" id="IPR004651">
    <property type="entry name" value="HisF"/>
</dbReference>
<dbReference type="InterPro" id="IPR050064">
    <property type="entry name" value="IGPS_HisA/HisF"/>
</dbReference>
<dbReference type="InterPro" id="IPR011060">
    <property type="entry name" value="RibuloseP-bd_barrel"/>
</dbReference>
<dbReference type="NCBIfam" id="TIGR00735">
    <property type="entry name" value="hisF"/>
    <property type="match status" value="1"/>
</dbReference>
<dbReference type="PANTHER" id="PTHR21235:SF2">
    <property type="entry name" value="IMIDAZOLE GLYCEROL PHOSPHATE SYNTHASE HISHF"/>
    <property type="match status" value="1"/>
</dbReference>
<dbReference type="PANTHER" id="PTHR21235">
    <property type="entry name" value="IMIDAZOLE GLYCEROL PHOSPHATE SYNTHASE SUBUNIT HISF/H IGP SYNTHASE SUBUNIT HISF/H"/>
    <property type="match status" value="1"/>
</dbReference>
<dbReference type="Pfam" id="PF00977">
    <property type="entry name" value="His_biosynth"/>
    <property type="match status" value="1"/>
</dbReference>
<dbReference type="SUPFAM" id="SSF51366">
    <property type="entry name" value="Ribulose-phoshate binding barrel"/>
    <property type="match status" value="1"/>
</dbReference>
<sequence length="257" mass="27369">MVALRLIPCLDVANGRVVKGVNFVGLRDAGDPVELACRYSREGADELVFLDIAASHEARATLVEIVRRTAESVTIPFTVGGGISSIEGITELLRAGADKISLNSSAVKDPGLVSRGACQFGSQCIVVAIDAKRRLEESSGWDVFVNGGRKNTGLDALSWARKVVELGAGEILLTSMDGDGTQKGYDLELTKTISQSVQVPVIASGGAGCLEDVFEAFEYGNASAALLASLLHDQDLTIEEIKNYLLKKNLIIRPTNY</sequence>
<accession>Q7VDF1</accession>
<feature type="chain" id="PRO_0000142199" description="Imidazole glycerol phosphate synthase subunit HisF">
    <location>
        <begin position="1"/>
        <end position="257"/>
    </location>
</feature>
<feature type="active site" evidence="1">
    <location>
        <position position="11"/>
    </location>
</feature>
<feature type="active site" evidence="1">
    <location>
        <position position="130"/>
    </location>
</feature>
<name>HIS6_PROMA</name>
<comment type="function">
    <text evidence="1">IGPS catalyzes the conversion of PRFAR and glutamine to IGP, AICAR and glutamate. The HisF subunit catalyzes the cyclization activity that produces IGP and AICAR from PRFAR using the ammonia provided by the HisH subunit.</text>
</comment>
<comment type="catalytic activity">
    <reaction evidence="1">
        <text>5-[(5-phospho-1-deoxy-D-ribulos-1-ylimino)methylamino]-1-(5-phospho-beta-D-ribosyl)imidazole-4-carboxamide + L-glutamine = D-erythro-1-(imidazol-4-yl)glycerol 3-phosphate + 5-amino-1-(5-phospho-beta-D-ribosyl)imidazole-4-carboxamide + L-glutamate + H(+)</text>
        <dbReference type="Rhea" id="RHEA:24793"/>
        <dbReference type="ChEBI" id="CHEBI:15378"/>
        <dbReference type="ChEBI" id="CHEBI:29985"/>
        <dbReference type="ChEBI" id="CHEBI:58278"/>
        <dbReference type="ChEBI" id="CHEBI:58359"/>
        <dbReference type="ChEBI" id="CHEBI:58475"/>
        <dbReference type="ChEBI" id="CHEBI:58525"/>
        <dbReference type="EC" id="4.3.2.10"/>
    </reaction>
</comment>
<comment type="pathway">
    <text evidence="1">Amino-acid biosynthesis; L-histidine biosynthesis; L-histidine from 5-phospho-alpha-D-ribose 1-diphosphate: step 5/9.</text>
</comment>
<comment type="subunit">
    <text evidence="1">Heterodimer of HisH and HisF.</text>
</comment>
<comment type="subcellular location">
    <subcellularLocation>
        <location evidence="1">Cytoplasm</location>
    </subcellularLocation>
</comment>
<comment type="similarity">
    <text evidence="1">Belongs to the HisA/HisF family.</text>
</comment>
<evidence type="ECO:0000255" key="1">
    <source>
        <dbReference type="HAMAP-Rule" id="MF_01013"/>
    </source>
</evidence>
<protein>
    <recommendedName>
        <fullName evidence="1">Imidazole glycerol phosphate synthase subunit HisF</fullName>
        <ecNumber evidence="1">4.3.2.10</ecNumber>
    </recommendedName>
    <alternativeName>
        <fullName evidence="1">IGP synthase cyclase subunit</fullName>
    </alternativeName>
    <alternativeName>
        <fullName evidence="1">IGP synthase subunit HisF</fullName>
    </alternativeName>
    <alternativeName>
        <fullName evidence="1">ImGP synthase subunit HisF</fullName>
        <shortName evidence="1">IGPS subunit HisF</shortName>
    </alternativeName>
</protein>